<keyword id="KW-0067">ATP-binding</keyword>
<keyword id="KW-0963">Cytoplasm</keyword>
<keyword id="KW-0206">Cytoskeleton</keyword>
<keyword id="KW-0418">Kinase</keyword>
<keyword id="KW-0547">Nucleotide-binding</keyword>
<keyword id="KW-1185">Reference proteome</keyword>
<keyword id="KW-0723">Serine/threonine-protein kinase</keyword>
<keyword id="KW-0808">Transferase</keyword>
<keyword id="KW-0832">Ubl conjugation</keyword>
<evidence type="ECO:0000250" key="1"/>
<evidence type="ECO:0000255" key="2">
    <source>
        <dbReference type="PROSITE-ProRule" id="PRU00154"/>
    </source>
</evidence>
<evidence type="ECO:0000255" key="3">
    <source>
        <dbReference type="PROSITE-ProRule" id="PRU00159"/>
    </source>
</evidence>
<evidence type="ECO:0000255" key="4">
    <source>
        <dbReference type="PROSITE-ProRule" id="PRU01328"/>
    </source>
</evidence>
<evidence type="ECO:0000255" key="5">
    <source>
        <dbReference type="PROSITE-ProRule" id="PRU01329"/>
    </source>
</evidence>
<evidence type="ECO:0000256" key="6">
    <source>
        <dbReference type="SAM" id="MobiDB-lite"/>
    </source>
</evidence>
<comment type="function">
    <text evidence="1">Serine/threonine-protein kinase that plays a central role in centriole duplication. Able to trigger procentriole formation on the surface of the mother centriole cylinder, using mother centriole as a platform, leading to the recruitment of centriole biogenesis proteins such as sas-6. When overexpressed, it is able to induce centrosome amplification through the simultaneous generation of multiple procentrioles adjoining each parental centriole during S phase. Centrosome amplification following overexpression can initiate tumorigenesis, highlighting the importance of centrosome regulation in cancers (By similarity).</text>
</comment>
<comment type="catalytic activity">
    <reaction>
        <text>L-seryl-[protein] + ATP = O-phospho-L-seryl-[protein] + ADP + H(+)</text>
        <dbReference type="Rhea" id="RHEA:17989"/>
        <dbReference type="Rhea" id="RHEA-COMP:9863"/>
        <dbReference type="Rhea" id="RHEA-COMP:11604"/>
        <dbReference type="ChEBI" id="CHEBI:15378"/>
        <dbReference type="ChEBI" id="CHEBI:29999"/>
        <dbReference type="ChEBI" id="CHEBI:30616"/>
        <dbReference type="ChEBI" id="CHEBI:83421"/>
        <dbReference type="ChEBI" id="CHEBI:456216"/>
        <dbReference type="EC" id="2.7.11.21"/>
    </reaction>
</comment>
<comment type="catalytic activity">
    <reaction>
        <text>L-threonyl-[protein] + ATP = O-phospho-L-threonyl-[protein] + ADP + H(+)</text>
        <dbReference type="Rhea" id="RHEA:46608"/>
        <dbReference type="Rhea" id="RHEA-COMP:11060"/>
        <dbReference type="Rhea" id="RHEA-COMP:11605"/>
        <dbReference type="ChEBI" id="CHEBI:15378"/>
        <dbReference type="ChEBI" id="CHEBI:30013"/>
        <dbReference type="ChEBI" id="CHEBI:30616"/>
        <dbReference type="ChEBI" id="CHEBI:61977"/>
        <dbReference type="ChEBI" id="CHEBI:456216"/>
        <dbReference type="EC" id="2.7.11.21"/>
    </reaction>
</comment>
<comment type="subunit">
    <text evidence="1">Homodimer.</text>
</comment>
<comment type="subcellular location">
    <subcellularLocation>
        <location evidence="1">Cytoplasm</location>
        <location evidence="1">Cytoskeleton</location>
        <location evidence="1">Microtubule organizing center</location>
        <location evidence="1">Centrosome</location>
        <location evidence="1">Centriole</location>
    </subcellularLocation>
</comment>
<comment type="PTM">
    <text evidence="1">Ubiquitinated by the SCF(Slimb) ubiquitin ligase complex; leading to its degradation by the proteasome during interphase and regulating centriole number and ensuring the block to centriole reduplication.</text>
</comment>
<comment type="similarity">
    <text evidence="3 4 5">Belongs to the protein kinase superfamily. Ser/Thr protein kinase family. CDC5/Polo subfamily.</text>
</comment>
<protein>
    <recommendedName>
        <fullName>Serine/threonine-protein kinase PLK4</fullName>
        <ecNumber>2.7.11.21</ecNumber>
    </recommendedName>
    <alternativeName>
        <fullName>Polo-like kinase 4</fullName>
        <shortName>PLK-4</shortName>
    </alternativeName>
    <alternativeName>
        <fullName>Serine/threonine-protein kinase SAK</fullName>
    </alternativeName>
</protein>
<reference key="1">
    <citation type="journal article" date="2007" name="Nature">
        <title>Evolution of genes and genomes on the Drosophila phylogeny.</title>
        <authorList>
            <consortium name="Drosophila 12 genomes consortium"/>
        </authorList>
    </citation>
    <scope>NUCLEOTIDE SEQUENCE [LARGE SCALE GENOMIC DNA]</scope>
    <source>
        <strain>Tucson 15010-1051.87</strain>
    </source>
</reference>
<dbReference type="EC" id="2.7.11.21"/>
<dbReference type="EMBL" id="CH940647">
    <property type="protein sequence ID" value="EDW69957.1"/>
    <property type="molecule type" value="Genomic_DNA"/>
</dbReference>
<dbReference type="RefSeq" id="XP_002047615.1">
    <property type="nucleotide sequence ID" value="XM_002047579.4"/>
</dbReference>
<dbReference type="SMR" id="B4LDJ6"/>
<dbReference type="FunCoup" id="B4LDJ6">
    <property type="interactions" value="331"/>
</dbReference>
<dbReference type="STRING" id="7244.B4LDJ6"/>
<dbReference type="EnsemblMetazoa" id="FBtr0227757">
    <property type="protein sequence ID" value="FBpp0226249"/>
    <property type="gene ID" value="FBgn0199086"/>
</dbReference>
<dbReference type="EnsemblMetazoa" id="XM_002047579.3">
    <property type="protein sequence ID" value="XP_002047615.1"/>
    <property type="gene ID" value="LOC6624728"/>
</dbReference>
<dbReference type="GeneID" id="6624728"/>
<dbReference type="KEGG" id="dvi:6624728"/>
<dbReference type="CTD" id="40384"/>
<dbReference type="eggNOG" id="KOG0575">
    <property type="taxonomic scope" value="Eukaryota"/>
</dbReference>
<dbReference type="HOGENOM" id="CLU_008726_2_0_1"/>
<dbReference type="InParanoid" id="B4LDJ6"/>
<dbReference type="OMA" id="LPSKHWK"/>
<dbReference type="OrthoDB" id="10004143at2759"/>
<dbReference type="PhylomeDB" id="B4LDJ6"/>
<dbReference type="ChiTaRS" id="SAK">
    <property type="organism name" value="fly"/>
</dbReference>
<dbReference type="Proteomes" id="UP000008792">
    <property type="component" value="Unassembled WGS sequence"/>
</dbReference>
<dbReference type="GO" id="GO:0005814">
    <property type="term" value="C:centriole"/>
    <property type="evidence" value="ECO:0007669"/>
    <property type="project" value="UniProtKB-SubCell"/>
</dbReference>
<dbReference type="GO" id="GO:0005737">
    <property type="term" value="C:cytoplasm"/>
    <property type="evidence" value="ECO:0007669"/>
    <property type="project" value="UniProtKB-KW"/>
</dbReference>
<dbReference type="GO" id="GO:0005634">
    <property type="term" value="C:nucleus"/>
    <property type="evidence" value="ECO:0007669"/>
    <property type="project" value="TreeGrafter"/>
</dbReference>
<dbReference type="GO" id="GO:0005524">
    <property type="term" value="F:ATP binding"/>
    <property type="evidence" value="ECO:0007669"/>
    <property type="project" value="UniProtKB-KW"/>
</dbReference>
<dbReference type="GO" id="GO:0106310">
    <property type="term" value="F:protein serine kinase activity"/>
    <property type="evidence" value="ECO:0007669"/>
    <property type="project" value="RHEA"/>
</dbReference>
<dbReference type="GO" id="GO:0004674">
    <property type="term" value="F:protein serine/threonine kinase activity"/>
    <property type="evidence" value="ECO:0007669"/>
    <property type="project" value="UniProtKB-KW"/>
</dbReference>
<dbReference type="CDD" id="cd13114">
    <property type="entry name" value="POLO_box_Plk4_1"/>
    <property type="match status" value="1"/>
</dbReference>
<dbReference type="CDD" id="cd13115">
    <property type="entry name" value="POLO_box_Plk4_2"/>
    <property type="match status" value="1"/>
</dbReference>
<dbReference type="CDD" id="cd13116">
    <property type="entry name" value="POLO_box_Plk4_3"/>
    <property type="match status" value="1"/>
</dbReference>
<dbReference type="FunFam" id="3.30.200.20:FF:000042">
    <property type="entry name" value="Aurora kinase A"/>
    <property type="match status" value="1"/>
</dbReference>
<dbReference type="FunFam" id="1.10.510.10:FF:000576">
    <property type="entry name" value="Serine/threonine-protein kinase PLK4"/>
    <property type="match status" value="1"/>
</dbReference>
<dbReference type="FunFam" id="3.30.1120.130:FF:000002">
    <property type="entry name" value="Serine/threonine-protein kinase PLK4"/>
    <property type="match status" value="1"/>
</dbReference>
<dbReference type="Gene3D" id="2.40.50.930">
    <property type="match status" value="1"/>
</dbReference>
<dbReference type="Gene3D" id="3.30.1120.120">
    <property type="match status" value="1"/>
</dbReference>
<dbReference type="Gene3D" id="3.30.1120.130">
    <property type="match status" value="1"/>
</dbReference>
<dbReference type="Gene3D" id="1.10.510.10">
    <property type="entry name" value="Transferase(Phosphotransferase) domain 1"/>
    <property type="match status" value="1"/>
</dbReference>
<dbReference type="InterPro" id="IPR011009">
    <property type="entry name" value="Kinase-like_dom_sf"/>
</dbReference>
<dbReference type="InterPro" id="IPR047108">
    <property type="entry name" value="Plk4-like_POLO_box_2_sf"/>
</dbReference>
<dbReference type="InterPro" id="IPR000959">
    <property type="entry name" value="POLO_box_dom"/>
</dbReference>
<dbReference type="InterPro" id="IPR033699">
    <property type="entry name" value="POLO_box_Plk4_1"/>
</dbReference>
<dbReference type="InterPro" id="IPR033698">
    <property type="entry name" value="POLO_box_Plk4_2"/>
</dbReference>
<dbReference type="InterPro" id="IPR033696">
    <property type="entry name" value="POLO_box_Plk4_C"/>
</dbReference>
<dbReference type="InterPro" id="IPR000719">
    <property type="entry name" value="Prot_kinase_dom"/>
</dbReference>
<dbReference type="InterPro" id="IPR017441">
    <property type="entry name" value="Protein_kinase_ATP_BS"/>
</dbReference>
<dbReference type="InterPro" id="IPR046437">
    <property type="entry name" value="Ser_Thr-PK_POLO_box_1_sf"/>
</dbReference>
<dbReference type="InterPro" id="IPR008266">
    <property type="entry name" value="Tyr_kinase_AS"/>
</dbReference>
<dbReference type="PANTHER" id="PTHR24345">
    <property type="entry name" value="SERINE/THREONINE-PROTEIN KINASE PLK"/>
    <property type="match status" value="1"/>
</dbReference>
<dbReference type="PANTHER" id="PTHR24345:SF91">
    <property type="entry name" value="SERINE_THREONINE-PROTEIN KINASE PLK4"/>
    <property type="match status" value="1"/>
</dbReference>
<dbReference type="Pfam" id="PF00069">
    <property type="entry name" value="Pkinase"/>
    <property type="match status" value="1"/>
</dbReference>
<dbReference type="Pfam" id="PF18190">
    <property type="entry name" value="Plk4_PB1"/>
    <property type="match status" value="1"/>
</dbReference>
<dbReference type="Pfam" id="PF18409">
    <property type="entry name" value="Plk4_PB2"/>
    <property type="match status" value="1"/>
</dbReference>
<dbReference type="SUPFAM" id="SSF82615">
    <property type="entry name" value="Polo-box domain"/>
    <property type="match status" value="1"/>
</dbReference>
<dbReference type="SUPFAM" id="SSF56112">
    <property type="entry name" value="Protein kinase-like (PK-like)"/>
    <property type="match status" value="1"/>
</dbReference>
<dbReference type="PROSITE" id="PS51984">
    <property type="entry name" value="CPB1"/>
    <property type="match status" value="1"/>
</dbReference>
<dbReference type="PROSITE" id="PS51985">
    <property type="entry name" value="CPB2"/>
    <property type="match status" value="1"/>
</dbReference>
<dbReference type="PROSITE" id="PS50078">
    <property type="entry name" value="POLO_BOX"/>
    <property type="match status" value="1"/>
</dbReference>
<dbReference type="PROSITE" id="PS00107">
    <property type="entry name" value="PROTEIN_KINASE_ATP"/>
    <property type="match status" value="1"/>
</dbReference>
<dbReference type="PROSITE" id="PS50011">
    <property type="entry name" value="PROTEIN_KINASE_DOM"/>
    <property type="match status" value="1"/>
</dbReference>
<name>PLK4_DROVI</name>
<organism>
    <name type="scientific">Drosophila virilis</name>
    <name type="common">Fruit fly</name>
    <dbReference type="NCBI Taxonomy" id="7244"/>
    <lineage>
        <taxon>Eukaryota</taxon>
        <taxon>Metazoa</taxon>
        <taxon>Ecdysozoa</taxon>
        <taxon>Arthropoda</taxon>
        <taxon>Hexapoda</taxon>
        <taxon>Insecta</taxon>
        <taxon>Pterygota</taxon>
        <taxon>Neoptera</taxon>
        <taxon>Endopterygota</taxon>
        <taxon>Diptera</taxon>
        <taxon>Brachycera</taxon>
        <taxon>Muscomorpha</taxon>
        <taxon>Ephydroidea</taxon>
        <taxon>Drosophilidae</taxon>
        <taxon>Drosophila</taxon>
    </lineage>
</organism>
<feature type="chain" id="PRO_0000385297" description="Serine/threonine-protein kinase PLK4">
    <location>
        <begin position="1"/>
        <end position="781"/>
    </location>
</feature>
<feature type="domain" description="Protein kinase" evidence="3">
    <location>
        <begin position="14"/>
        <end position="268"/>
    </location>
</feature>
<feature type="domain" description="Cryptic POLO box 1 (CPB1)" evidence="4">
    <location>
        <begin position="397"/>
        <end position="514"/>
    </location>
</feature>
<feature type="domain" description="Cryptic POLO box 2 (CPB2)" evidence="5">
    <location>
        <begin position="515"/>
        <end position="618"/>
    </location>
</feature>
<feature type="domain" description="POLO box" evidence="2">
    <location>
        <begin position="672"/>
        <end position="751"/>
    </location>
</feature>
<feature type="region of interest" description="Disordered" evidence="6">
    <location>
        <begin position="463"/>
        <end position="486"/>
    </location>
</feature>
<feature type="compositionally biased region" description="Polar residues" evidence="6">
    <location>
        <begin position="473"/>
        <end position="486"/>
    </location>
</feature>
<feature type="active site" description="Proton acceptor" evidence="3">
    <location>
        <position position="139"/>
    </location>
</feature>
<feature type="binding site" evidence="3">
    <location>
        <begin position="20"/>
        <end position="28"/>
    </location>
    <ligand>
        <name>ATP</name>
        <dbReference type="ChEBI" id="CHEBI:30616"/>
    </ligand>
</feature>
<feature type="binding site" evidence="3">
    <location>
        <position position="43"/>
    </location>
    <ligand>
        <name>ATP</name>
        <dbReference type="ChEBI" id="CHEBI:30616"/>
    </ligand>
</feature>
<sequence>MLPFRTYGETIDEYEVQHLLGKGGFACVYKAKCLRSHQNVAIKMIDKKLIQGSGLSNRVRQEVEIHSRLKHPSVLQLYTFFQDANYVYLILELADNGELHRYMNQQMKRPFTEQEAASILRQVVDGLLYLHSHNIMHRDISMSNLLLSKDMHVKIADFGLATQLKRPDERHMTMCGTPNYISPEVVSHQSHGLPADLWSVGCMLYTLLVGRPPFDTDAVQSTLNKVVQSDYTIPGHLSYEARDLIDKLLRKNPHERISLEQVLRHPFMVKAGGSTISYTTNGASDGYGQSIVSGDSGIVTFASNDSKNSHRLRSVEQQATPQMMPQIQEEYGYYQDHRQKYAPHAAYRQSSAETLDSTEMDWQRMGQNAQKANFLAHSTPAAPVPAPVIRKAGKHNTEHISVPPLNTLRLQPTRYKTKNAIMSIVANGEVVIEFIKSKSKMNEDRIIDICRISGDGRRIIIHQPDPGRGLPIQEQTSETHSSGTDNVYNYDNLPSKHWKKYVYAARFVGLVKSKTPKVTYFSALAKCHLMENMTDFEMNYYSGAKLTKSPSEGIKVFDIHGVQLLDQSSSEAKRLIEHSNECFAHCLSICNALELAQTGSNTCFPVTIGRRPVVEVLPSHRPEGLRDTTNFAYSTPKSQQGSINFSISTISSMRSGSDNIGSQLLAAQQNVPIKRLNVPGVGTATELSHGIVQVQFVDGSVISVIPEAQGGGITYTQSNGVSTHFPDHDDLPLSVRDRLSHLPQVQMKLRCAPLISSKKFDCNAMNAKSTASAPWYNRMLI</sequence>
<proteinExistence type="inferred from homology"/>
<accession>B4LDJ6</accession>
<gene>
    <name type="primary">SAK</name>
    <name type="ORF">GJ11832</name>
</gene>